<comment type="subcellular location">
    <subcellularLocation>
        <location evidence="2">Cell membrane</location>
        <topology evidence="2">Lipid-anchor</topology>
    </subcellularLocation>
</comment>
<comment type="similarity">
    <text evidence="2">To M.tuberculosis Rv2585c and M.leprae ML0489.</text>
</comment>
<evidence type="ECO:0000255" key="1">
    <source>
        <dbReference type="PROSITE-ProRule" id="PRU00303"/>
    </source>
</evidence>
<evidence type="ECO:0000305" key="2"/>
<keyword id="KW-1003">Cell membrane</keyword>
<keyword id="KW-0449">Lipoprotein</keyword>
<keyword id="KW-0472">Membrane</keyword>
<keyword id="KW-0564">Palmitate</keyword>
<keyword id="KW-1185">Reference proteome</keyword>
<keyword id="KW-0732">Signal</keyword>
<sequence length="557" mass="58619">MAPRRRRHTRIAGLRVVGTATLVAATTLTACSGSAAAQIDYVVDGALVTYNTNTVIGAASAGAQAFARTLTGFGYHGPDGQVVADRDFGTVSVVEGSPLILDYQISDDAVYSDGRPVTCDDLVLAWAAQSGRFPGFDAATQAGYVDIANIECTAGQKKARVSFIPDRSVVDHSQLFTATSLMPSHVIADQLHIDVTAALLSNNVSAVEQIARLWNSTWDLKPGRSHDEVRSRFPSSGPYKIESVLDDGAVVLVANDRWWGTKAITKRITVWPQGADIQDRVNNRSVDVVDVAAGSSGSLVTPDSYQRTDYPSAGIEQLIFAPQGSLAQSRTRRALALCVPRDAIARDAGVPIANSRLSPATDDALTDADGAAEARQFGRVDPAAARDALGGTPLTVRIGYGRPNARLAATIGTIADACAPAGITVSDVTVDTPGPQALRDGKIDVLLASTGGATGSGSSGSSAMDAYDLHSGNGNNLSGYANAQIDGIISALAVSADPAERARLLAEAAPVLWDEMPTLPLYRQQRTLLMSTKMYAVSRNPTRWGAGWNMDRWALAR</sequence>
<name>Y2616_MYCBO</name>
<accession>P59984</accession>
<accession>A0A1R3Y1M1</accession>
<accession>X2BLA5</accession>
<gene>
    <name type="ordered locus">BQ2027_MB2616C</name>
</gene>
<feature type="signal peptide" evidence="1">
    <location>
        <begin position="1"/>
        <end position="30"/>
    </location>
</feature>
<feature type="chain" id="PRO_0000014136" description="Uncharacterized lipoprotein Mb2616c">
    <location>
        <begin position="31"/>
        <end position="557"/>
    </location>
</feature>
<feature type="lipid moiety-binding region" description="N-palmitoyl cysteine" evidence="2">
    <location>
        <position position="31"/>
    </location>
</feature>
<feature type="lipid moiety-binding region" description="S-diacylglycerol cysteine" evidence="2">
    <location>
        <position position="31"/>
    </location>
</feature>
<protein>
    <recommendedName>
        <fullName>Uncharacterized lipoprotein Mb2616c</fullName>
    </recommendedName>
</protein>
<reference key="1">
    <citation type="journal article" date="2003" name="Proc. Natl. Acad. Sci. U.S.A.">
        <title>The complete genome sequence of Mycobacterium bovis.</title>
        <authorList>
            <person name="Garnier T."/>
            <person name="Eiglmeier K."/>
            <person name="Camus J.-C."/>
            <person name="Medina N."/>
            <person name="Mansoor H."/>
            <person name="Pryor M."/>
            <person name="Duthoy S."/>
            <person name="Grondin S."/>
            <person name="Lacroix C."/>
            <person name="Monsempe C."/>
            <person name="Simon S."/>
            <person name="Harris B."/>
            <person name="Atkin R."/>
            <person name="Doggett J."/>
            <person name="Mayes R."/>
            <person name="Keating L."/>
            <person name="Wheeler P.R."/>
            <person name="Parkhill J."/>
            <person name="Barrell B.G."/>
            <person name="Cole S.T."/>
            <person name="Gordon S.V."/>
            <person name="Hewinson R.G."/>
        </authorList>
    </citation>
    <scope>NUCLEOTIDE SEQUENCE [LARGE SCALE GENOMIC DNA]</scope>
    <source>
        <strain>ATCC BAA-935 / AF2122/97</strain>
    </source>
</reference>
<reference key="2">
    <citation type="journal article" date="2017" name="Genome Announc.">
        <title>Updated reference genome sequence and annotation of Mycobacterium bovis AF2122/97.</title>
        <authorList>
            <person name="Malone K.M."/>
            <person name="Farrell D."/>
            <person name="Stuber T.P."/>
            <person name="Schubert O.T."/>
            <person name="Aebersold R."/>
            <person name="Robbe-Austerman S."/>
            <person name="Gordon S.V."/>
        </authorList>
    </citation>
    <scope>NUCLEOTIDE SEQUENCE [LARGE SCALE GENOMIC DNA]</scope>
    <scope>GENOME REANNOTATION</scope>
    <source>
        <strain>ATCC BAA-935 / AF2122/97</strain>
    </source>
</reference>
<organism>
    <name type="scientific">Mycobacterium bovis (strain ATCC BAA-935 / AF2122/97)</name>
    <dbReference type="NCBI Taxonomy" id="233413"/>
    <lineage>
        <taxon>Bacteria</taxon>
        <taxon>Bacillati</taxon>
        <taxon>Actinomycetota</taxon>
        <taxon>Actinomycetes</taxon>
        <taxon>Mycobacteriales</taxon>
        <taxon>Mycobacteriaceae</taxon>
        <taxon>Mycobacterium</taxon>
        <taxon>Mycobacterium tuberculosis complex</taxon>
    </lineage>
</organism>
<dbReference type="EMBL" id="LT708304">
    <property type="protein sequence ID" value="SIU01234.1"/>
    <property type="molecule type" value="Genomic_DNA"/>
</dbReference>
<dbReference type="RefSeq" id="NP_856262.1">
    <property type="nucleotide sequence ID" value="NC_002945.3"/>
</dbReference>
<dbReference type="RefSeq" id="WP_003413373.1">
    <property type="nucleotide sequence ID" value="NC_002945.4"/>
</dbReference>
<dbReference type="SMR" id="P59984"/>
<dbReference type="KEGG" id="mbo:BQ2027_MB2616C"/>
<dbReference type="PATRIC" id="fig|233413.5.peg.2877"/>
<dbReference type="Proteomes" id="UP000001419">
    <property type="component" value="Chromosome"/>
</dbReference>
<dbReference type="GO" id="GO:0005886">
    <property type="term" value="C:plasma membrane"/>
    <property type="evidence" value="ECO:0007669"/>
    <property type="project" value="UniProtKB-SubCell"/>
</dbReference>
<dbReference type="GO" id="GO:1904680">
    <property type="term" value="F:peptide transmembrane transporter activity"/>
    <property type="evidence" value="ECO:0007669"/>
    <property type="project" value="TreeGrafter"/>
</dbReference>
<dbReference type="GO" id="GO:0015833">
    <property type="term" value="P:peptide transport"/>
    <property type="evidence" value="ECO:0007669"/>
    <property type="project" value="TreeGrafter"/>
</dbReference>
<dbReference type="FunFam" id="3.90.76.10:FF:000016">
    <property type="entry name" value="Possible conserved lipoprotein"/>
    <property type="match status" value="1"/>
</dbReference>
<dbReference type="Gene3D" id="3.90.76.10">
    <property type="entry name" value="Dipeptide-binding Protein, Domain 1"/>
    <property type="match status" value="1"/>
</dbReference>
<dbReference type="Gene3D" id="3.10.105.10">
    <property type="entry name" value="Dipeptide-binding Protein, Domain 3"/>
    <property type="match status" value="1"/>
</dbReference>
<dbReference type="Gene3D" id="3.40.190.10">
    <property type="entry name" value="Periplasmic binding protein-like II"/>
    <property type="match status" value="1"/>
</dbReference>
<dbReference type="InterPro" id="IPR039424">
    <property type="entry name" value="SBP_5"/>
</dbReference>
<dbReference type="InterPro" id="IPR000914">
    <property type="entry name" value="SBP_5_dom"/>
</dbReference>
<dbReference type="PANTHER" id="PTHR30290:SF65">
    <property type="entry name" value="MONOACYL PHOSPHATIDYLINOSITOL TETRAMANNOSIDE-BINDING PROTEIN LPQW-RELATED"/>
    <property type="match status" value="1"/>
</dbReference>
<dbReference type="PANTHER" id="PTHR30290">
    <property type="entry name" value="PERIPLASMIC BINDING COMPONENT OF ABC TRANSPORTER"/>
    <property type="match status" value="1"/>
</dbReference>
<dbReference type="Pfam" id="PF00496">
    <property type="entry name" value="SBP_bac_5"/>
    <property type="match status" value="1"/>
</dbReference>
<dbReference type="SUPFAM" id="SSF53850">
    <property type="entry name" value="Periplasmic binding protein-like II"/>
    <property type="match status" value="1"/>
</dbReference>
<dbReference type="PROSITE" id="PS51257">
    <property type="entry name" value="PROKAR_LIPOPROTEIN"/>
    <property type="match status" value="1"/>
</dbReference>
<proteinExistence type="inferred from homology"/>